<name>SCOA_BACSU</name>
<evidence type="ECO:0000250" key="1"/>
<evidence type="ECO:0000255" key="2"/>
<evidence type="ECO:0000305" key="3"/>
<evidence type="ECO:0007829" key="4">
    <source>
        <dbReference type="PDB" id="3CDK"/>
    </source>
</evidence>
<protein>
    <recommendedName>
        <fullName>Probable succinyl-CoA:3-ketoacid coenzyme A transferase subunit A</fullName>
        <ecNumber>2.8.3.5</ecNumber>
    </recommendedName>
    <alternativeName>
        <fullName>Succinyl-CoA:3-oxoacid CoA-transferase</fullName>
        <shortName>OXCT A</shortName>
    </alternativeName>
</protein>
<feature type="chain" id="PRO_0000157908" description="Probable succinyl-CoA:3-ketoacid coenzyme A transferase subunit A">
    <location>
        <begin position="1"/>
        <end position="238"/>
    </location>
</feature>
<feature type="binding site" evidence="2">
    <location>
        <begin position="24"/>
        <end position="30"/>
    </location>
    <ligand>
        <name>CoA</name>
        <dbReference type="ChEBI" id="CHEBI:57287"/>
    </ligand>
</feature>
<feature type="helix" evidence="4">
    <location>
        <begin position="8"/>
        <end position="12"/>
    </location>
</feature>
<feature type="strand" evidence="4">
    <location>
        <begin position="20"/>
        <end position="23"/>
    </location>
</feature>
<feature type="helix" evidence="4">
    <location>
        <begin position="33"/>
        <end position="42"/>
    </location>
</feature>
<feature type="strand" evidence="4">
    <location>
        <begin position="46"/>
        <end position="53"/>
    </location>
</feature>
<feature type="strand" evidence="4">
    <location>
        <begin position="57"/>
        <end position="59"/>
    </location>
</feature>
<feature type="helix" evidence="4">
    <location>
        <begin position="62"/>
        <end position="66"/>
    </location>
</feature>
<feature type="strand" evidence="4">
    <location>
        <begin position="70"/>
        <end position="77"/>
    </location>
</feature>
<feature type="helix" evidence="4">
    <location>
        <begin position="82"/>
        <end position="88"/>
    </location>
</feature>
<feature type="turn" evidence="4">
    <location>
        <begin position="89"/>
        <end position="91"/>
    </location>
</feature>
<feature type="strand" evidence="4">
    <location>
        <begin position="92"/>
        <end position="97"/>
    </location>
</feature>
<feature type="helix" evidence="4">
    <location>
        <begin position="100"/>
        <end position="112"/>
    </location>
</feature>
<feature type="strand" evidence="4">
    <location>
        <begin position="116"/>
        <end position="120"/>
    </location>
</feature>
<feature type="turn" evidence="4">
    <location>
        <begin position="121"/>
        <end position="124"/>
    </location>
</feature>
<feature type="helix" evidence="4">
    <location>
        <begin position="126"/>
        <end position="128"/>
    </location>
</feature>
<feature type="strand" evidence="4">
    <location>
        <begin position="133"/>
        <end position="136"/>
    </location>
</feature>
<feature type="strand" evidence="4">
    <location>
        <begin position="139"/>
        <end position="145"/>
    </location>
</feature>
<feature type="strand" evidence="4">
    <location>
        <begin position="149"/>
        <end position="160"/>
    </location>
</feature>
<feature type="helix" evidence="4">
    <location>
        <begin position="169"/>
        <end position="171"/>
    </location>
</feature>
<feature type="helix" evidence="4">
    <location>
        <begin position="175"/>
        <end position="181"/>
    </location>
</feature>
<feature type="strand" evidence="4">
    <location>
        <begin position="182"/>
        <end position="193"/>
    </location>
</feature>
<feature type="turn" evidence="4">
    <location>
        <begin position="200"/>
        <end position="202"/>
    </location>
</feature>
<feature type="helix" evidence="4">
    <location>
        <begin position="207"/>
        <end position="209"/>
    </location>
</feature>
<feature type="strand" evidence="4">
    <location>
        <begin position="211"/>
        <end position="215"/>
    </location>
</feature>
<comment type="catalytic activity">
    <reaction>
        <text>a 3-oxo acid + succinyl-CoA = a 3-oxoacyl-CoA + succinate</text>
        <dbReference type="Rhea" id="RHEA:24564"/>
        <dbReference type="ChEBI" id="CHEBI:30031"/>
        <dbReference type="ChEBI" id="CHEBI:35973"/>
        <dbReference type="ChEBI" id="CHEBI:57292"/>
        <dbReference type="ChEBI" id="CHEBI:90726"/>
        <dbReference type="EC" id="2.8.3.5"/>
    </reaction>
</comment>
<comment type="subunit">
    <text evidence="1">Heterodimer of a subunit A and a subunit B.</text>
</comment>
<comment type="similarity">
    <text evidence="3">Belongs to the 3-oxoacid CoA-transferase subunit A family.</text>
</comment>
<accession>P42315</accession>
<dbReference type="EC" id="2.8.3.5"/>
<dbReference type="EMBL" id="D83026">
    <property type="protein sequence ID" value="BAA11705.1"/>
    <property type="molecule type" value="Genomic_DNA"/>
</dbReference>
<dbReference type="EMBL" id="AL009126">
    <property type="protein sequence ID" value="CAB15925.1"/>
    <property type="molecule type" value="Genomic_DNA"/>
</dbReference>
<dbReference type="PIR" id="B70079">
    <property type="entry name" value="B70079"/>
</dbReference>
<dbReference type="RefSeq" id="NP_391778.1">
    <property type="nucleotide sequence ID" value="NC_000964.3"/>
</dbReference>
<dbReference type="RefSeq" id="WP_003244373.1">
    <property type="nucleotide sequence ID" value="NZ_OZ025638.1"/>
</dbReference>
<dbReference type="PDB" id="3CDK">
    <property type="method" value="X-ray"/>
    <property type="resolution" value="2.59 A"/>
    <property type="chains" value="A/C=1-238"/>
</dbReference>
<dbReference type="PDBsum" id="3CDK"/>
<dbReference type="SMR" id="P42315"/>
<dbReference type="FunCoup" id="P42315">
    <property type="interactions" value="127"/>
</dbReference>
<dbReference type="STRING" id="224308.BSU38990"/>
<dbReference type="PaxDb" id="224308-BSU38990"/>
<dbReference type="EnsemblBacteria" id="CAB15925">
    <property type="protein sequence ID" value="CAB15925"/>
    <property type="gene ID" value="BSU_38990"/>
</dbReference>
<dbReference type="GeneID" id="937468"/>
<dbReference type="KEGG" id="bsu:BSU38990"/>
<dbReference type="PATRIC" id="fig|224308.179.peg.4219"/>
<dbReference type="eggNOG" id="COG1788">
    <property type="taxonomic scope" value="Bacteria"/>
</dbReference>
<dbReference type="InParanoid" id="P42315"/>
<dbReference type="OrthoDB" id="9777193at2"/>
<dbReference type="PhylomeDB" id="P42315"/>
<dbReference type="BioCyc" id="BSUB:BSU38990-MONOMER"/>
<dbReference type="EvolutionaryTrace" id="P42315"/>
<dbReference type="Proteomes" id="UP000001570">
    <property type="component" value="Chromosome"/>
</dbReference>
<dbReference type="GO" id="GO:0008260">
    <property type="term" value="F:succinyl-CoA:3-oxo-acid CoA-transferase activity"/>
    <property type="evidence" value="ECO:0007669"/>
    <property type="project" value="UniProtKB-EC"/>
</dbReference>
<dbReference type="Gene3D" id="3.40.1080.10">
    <property type="entry name" value="Glutaconate Coenzyme A-transferase"/>
    <property type="match status" value="1"/>
</dbReference>
<dbReference type="InterPro" id="IPR012792">
    <property type="entry name" value="3-oxoacid_CoA-transf_A"/>
</dbReference>
<dbReference type="InterPro" id="IPR004165">
    <property type="entry name" value="CoA_trans_fam_I"/>
</dbReference>
<dbReference type="InterPro" id="IPR004163">
    <property type="entry name" value="CoA_transf_BS"/>
</dbReference>
<dbReference type="InterPro" id="IPR037171">
    <property type="entry name" value="NagB/RpiA_transferase-like"/>
</dbReference>
<dbReference type="NCBIfam" id="TIGR02429">
    <property type="entry name" value="pcaI_scoA_fam"/>
    <property type="match status" value="1"/>
</dbReference>
<dbReference type="PANTHER" id="PTHR13707:SF60">
    <property type="entry name" value="ACETATE COA-TRANSFERASE SUBUNIT ALPHA"/>
    <property type="match status" value="1"/>
</dbReference>
<dbReference type="PANTHER" id="PTHR13707">
    <property type="entry name" value="KETOACID-COENZYME A TRANSFERASE"/>
    <property type="match status" value="1"/>
</dbReference>
<dbReference type="Pfam" id="PF01144">
    <property type="entry name" value="CoA_trans"/>
    <property type="match status" value="1"/>
</dbReference>
<dbReference type="SMART" id="SM00882">
    <property type="entry name" value="CoA_trans"/>
    <property type="match status" value="1"/>
</dbReference>
<dbReference type="SUPFAM" id="SSF100950">
    <property type="entry name" value="NagB/RpiA/CoA transferase-like"/>
    <property type="match status" value="1"/>
</dbReference>
<dbReference type="PROSITE" id="PS01273">
    <property type="entry name" value="COA_TRANSF_1"/>
    <property type="match status" value="1"/>
</dbReference>
<reference key="1">
    <citation type="journal article" date="1996" name="Microbiology">
        <title>Sequencing of a 65 kb region of the Bacillus subtilis genome containing the lic and cel loci, and creation of a 177 kb contig covering the gnt-sacXY region.</title>
        <authorList>
            <person name="Yoshida K."/>
            <person name="Shindo K."/>
            <person name="Sano H."/>
            <person name="Seki S."/>
            <person name="Fujimura M."/>
            <person name="Yanai N."/>
            <person name="Miwa Y."/>
            <person name="Fujita Y."/>
        </authorList>
    </citation>
    <scope>NUCLEOTIDE SEQUENCE [GENOMIC DNA]</scope>
    <source>
        <strain>168 / BGSC1A1</strain>
    </source>
</reference>
<reference key="2">
    <citation type="journal article" date="1997" name="Nature">
        <title>The complete genome sequence of the Gram-positive bacterium Bacillus subtilis.</title>
        <authorList>
            <person name="Kunst F."/>
            <person name="Ogasawara N."/>
            <person name="Moszer I."/>
            <person name="Albertini A.M."/>
            <person name="Alloni G."/>
            <person name="Azevedo V."/>
            <person name="Bertero M.G."/>
            <person name="Bessieres P."/>
            <person name="Bolotin A."/>
            <person name="Borchert S."/>
            <person name="Borriss R."/>
            <person name="Boursier L."/>
            <person name="Brans A."/>
            <person name="Braun M."/>
            <person name="Brignell S.C."/>
            <person name="Bron S."/>
            <person name="Brouillet S."/>
            <person name="Bruschi C.V."/>
            <person name="Caldwell B."/>
            <person name="Capuano V."/>
            <person name="Carter N.M."/>
            <person name="Choi S.-K."/>
            <person name="Codani J.-J."/>
            <person name="Connerton I.F."/>
            <person name="Cummings N.J."/>
            <person name="Daniel R.A."/>
            <person name="Denizot F."/>
            <person name="Devine K.M."/>
            <person name="Duesterhoeft A."/>
            <person name="Ehrlich S.D."/>
            <person name="Emmerson P.T."/>
            <person name="Entian K.-D."/>
            <person name="Errington J."/>
            <person name="Fabret C."/>
            <person name="Ferrari E."/>
            <person name="Foulger D."/>
            <person name="Fritz C."/>
            <person name="Fujita M."/>
            <person name="Fujita Y."/>
            <person name="Fuma S."/>
            <person name="Galizzi A."/>
            <person name="Galleron N."/>
            <person name="Ghim S.-Y."/>
            <person name="Glaser P."/>
            <person name="Goffeau A."/>
            <person name="Golightly E.J."/>
            <person name="Grandi G."/>
            <person name="Guiseppi G."/>
            <person name="Guy B.J."/>
            <person name="Haga K."/>
            <person name="Haiech J."/>
            <person name="Harwood C.R."/>
            <person name="Henaut A."/>
            <person name="Hilbert H."/>
            <person name="Holsappel S."/>
            <person name="Hosono S."/>
            <person name="Hullo M.-F."/>
            <person name="Itaya M."/>
            <person name="Jones L.-M."/>
            <person name="Joris B."/>
            <person name="Karamata D."/>
            <person name="Kasahara Y."/>
            <person name="Klaerr-Blanchard M."/>
            <person name="Klein C."/>
            <person name="Kobayashi Y."/>
            <person name="Koetter P."/>
            <person name="Koningstein G."/>
            <person name="Krogh S."/>
            <person name="Kumano M."/>
            <person name="Kurita K."/>
            <person name="Lapidus A."/>
            <person name="Lardinois S."/>
            <person name="Lauber J."/>
            <person name="Lazarevic V."/>
            <person name="Lee S.-M."/>
            <person name="Levine A."/>
            <person name="Liu H."/>
            <person name="Masuda S."/>
            <person name="Mauel C."/>
            <person name="Medigue C."/>
            <person name="Medina N."/>
            <person name="Mellado R.P."/>
            <person name="Mizuno M."/>
            <person name="Moestl D."/>
            <person name="Nakai S."/>
            <person name="Noback M."/>
            <person name="Noone D."/>
            <person name="O'Reilly M."/>
            <person name="Ogawa K."/>
            <person name="Ogiwara A."/>
            <person name="Oudega B."/>
            <person name="Park S.-H."/>
            <person name="Parro V."/>
            <person name="Pohl T.M."/>
            <person name="Portetelle D."/>
            <person name="Porwollik S."/>
            <person name="Prescott A.M."/>
            <person name="Presecan E."/>
            <person name="Pujic P."/>
            <person name="Purnelle B."/>
            <person name="Rapoport G."/>
            <person name="Rey M."/>
            <person name="Reynolds S."/>
            <person name="Rieger M."/>
            <person name="Rivolta C."/>
            <person name="Rocha E."/>
            <person name="Roche B."/>
            <person name="Rose M."/>
            <person name="Sadaie Y."/>
            <person name="Sato T."/>
            <person name="Scanlan E."/>
            <person name="Schleich S."/>
            <person name="Schroeter R."/>
            <person name="Scoffone F."/>
            <person name="Sekiguchi J."/>
            <person name="Sekowska A."/>
            <person name="Seror S.J."/>
            <person name="Serror P."/>
            <person name="Shin B.-S."/>
            <person name="Soldo B."/>
            <person name="Sorokin A."/>
            <person name="Tacconi E."/>
            <person name="Takagi T."/>
            <person name="Takahashi H."/>
            <person name="Takemaru K."/>
            <person name="Takeuchi M."/>
            <person name="Tamakoshi A."/>
            <person name="Tanaka T."/>
            <person name="Terpstra P."/>
            <person name="Tognoni A."/>
            <person name="Tosato V."/>
            <person name="Uchiyama S."/>
            <person name="Vandenbol M."/>
            <person name="Vannier F."/>
            <person name="Vassarotti A."/>
            <person name="Viari A."/>
            <person name="Wambutt R."/>
            <person name="Wedler E."/>
            <person name="Wedler H."/>
            <person name="Weitzenegger T."/>
            <person name="Winters P."/>
            <person name="Wipat A."/>
            <person name="Yamamoto H."/>
            <person name="Yamane K."/>
            <person name="Yasumoto K."/>
            <person name="Yata K."/>
            <person name="Yoshida K."/>
            <person name="Yoshikawa H.-F."/>
            <person name="Zumstein E."/>
            <person name="Yoshikawa H."/>
            <person name="Danchin A."/>
        </authorList>
    </citation>
    <scope>NUCLEOTIDE SEQUENCE [LARGE SCALE GENOMIC DNA]</scope>
    <source>
        <strain>168</strain>
    </source>
</reference>
<keyword id="KW-0002">3D-structure</keyword>
<keyword id="KW-1185">Reference proteome</keyword>
<keyword id="KW-0808">Transferase</keyword>
<sequence length="238" mass="25399">MGKVLSSSKEAAKLIHDGDTLIAGGFGLCGIPEQLILSIRDQGVKDLTVVSNNCGVDDWGLGLLLANKQIKKMIASYVGENKIFERQFLSGELEVELVPQGTLAERIRAGGAGIPGFYTATGVGTSIAEGKEHKTFGGRTYVLERGITGDVAIVKAWKADTMGNLIFRKTARNFNPIAAMAGKITIAEAEEIVEAGELDPDHIHTPGIYVQHVVLGASQEKRIEKRTVQQASGKGEAK</sequence>
<gene>
    <name type="primary">scoA</name>
    <name type="synonym">yxjD</name>
    <name type="ordered locus">BSU38990</name>
    <name type="ORF">N15K</name>
</gene>
<proteinExistence type="evidence at protein level"/>
<organism>
    <name type="scientific">Bacillus subtilis (strain 168)</name>
    <dbReference type="NCBI Taxonomy" id="224308"/>
    <lineage>
        <taxon>Bacteria</taxon>
        <taxon>Bacillati</taxon>
        <taxon>Bacillota</taxon>
        <taxon>Bacilli</taxon>
        <taxon>Bacillales</taxon>
        <taxon>Bacillaceae</taxon>
        <taxon>Bacillus</taxon>
    </lineage>
</organism>